<evidence type="ECO:0000255" key="1">
    <source>
        <dbReference type="HAMAP-Rule" id="MF_00270"/>
    </source>
</evidence>
<evidence type="ECO:0000305" key="2"/>
<sequence length="76" mass="8900">MKREKGRRGKKRICNFCVDKAEVVDYKDVQRLKKYITERGKILPRRISGNCAKHQRLLTTAIKRARNIALLPFTAE</sequence>
<comment type="function">
    <text evidence="1">Binds as a heterodimer with protein bS6 to the central domain of the 16S rRNA, where it helps stabilize the platform of the 30S subunit.</text>
</comment>
<comment type="subunit">
    <text evidence="1">Part of the 30S ribosomal subunit. Forms a tight heterodimer with protein bS6.</text>
</comment>
<comment type="similarity">
    <text evidence="1">Belongs to the bacterial ribosomal protein bS18 family.</text>
</comment>
<reference key="1">
    <citation type="journal article" date="2008" name="Genome Res.">
        <title>The genome of Pelotomaculum thermopropionicum reveals niche-associated evolution in anaerobic microbiota.</title>
        <authorList>
            <person name="Kosaka T."/>
            <person name="Kato S."/>
            <person name="Shimoyama T."/>
            <person name="Ishii S."/>
            <person name="Abe T."/>
            <person name="Watanabe K."/>
        </authorList>
    </citation>
    <scope>NUCLEOTIDE SEQUENCE [LARGE SCALE GENOMIC DNA]</scope>
    <source>
        <strain>DSM 13744 / JCM 10971 / SI</strain>
    </source>
</reference>
<organism>
    <name type="scientific">Pelotomaculum thermopropionicum (strain DSM 13744 / JCM 10971 / SI)</name>
    <dbReference type="NCBI Taxonomy" id="370438"/>
    <lineage>
        <taxon>Bacteria</taxon>
        <taxon>Bacillati</taxon>
        <taxon>Bacillota</taxon>
        <taxon>Clostridia</taxon>
        <taxon>Eubacteriales</taxon>
        <taxon>Desulfotomaculaceae</taxon>
        <taxon>Pelotomaculum</taxon>
    </lineage>
</organism>
<protein>
    <recommendedName>
        <fullName evidence="1">Small ribosomal subunit protein bS18</fullName>
    </recommendedName>
    <alternativeName>
        <fullName evidence="2">30S ribosomal protein S18</fullName>
    </alternativeName>
</protein>
<feature type="chain" id="PRO_0000345526" description="Small ribosomal subunit protein bS18">
    <location>
        <begin position="1"/>
        <end position="76"/>
    </location>
</feature>
<keyword id="KW-1185">Reference proteome</keyword>
<keyword id="KW-0687">Ribonucleoprotein</keyword>
<keyword id="KW-0689">Ribosomal protein</keyword>
<keyword id="KW-0694">RNA-binding</keyword>
<keyword id="KW-0699">rRNA-binding</keyword>
<gene>
    <name evidence="1" type="primary">rpsR</name>
    <name type="ordered locus">PTH_2890</name>
</gene>
<accession>A5CY50</accession>
<proteinExistence type="inferred from homology"/>
<name>RS18_PELTS</name>
<dbReference type="EMBL" id="AP009389">
    <property type="protein sequence ID" value="BAF61071.1"/>
    <property type="molecule type" value="Genomic_DNA"/>
</dbReference>
<dbReference type="SMR" id="A5CY50"/>
<dbReference type="STRING" id="370438.PTH_2890"/>
<dbReference type="KEGG" id="pth:PTH_2890"/>
<dbReference type="eggNOG" id="COG0238">
    <property type="taxonomic scope" value="Bacteria"/>
</dbReference>
<dbReference type="HOGENOM" id="CLU_148710_2_2_9"/>
<dbReference type="Proteomes" id="UP000006556">
    <property type="component" value="Chromosome"/>
</dbReference>
<dbReference type="GO" id="GO:0022627">
    <property type="term" value="C:cytosolic small ribosomal subunit"/>
    <property type="evidence" value="ECO:0007669"/>
    <property type="project" value="TreeGrafter"/>
</dbReference>
<dbReference type="GO" id="GO:0070181">
    <property type="term" value="F:small ribosomal subunit rRNA binding"/>
    <property type="evidence" value="ECO:0007669"/>
    <property type="project" value="TreeGrafter"/>
</dbReference>
<dbReference type="GO" id="GO:0003735">
    <property type="term" value="F:structural constituent of ribosome"/>
    <property type="evidence" value="ECO:0007669"/>
    <property type="project" value="InterPro"/>
</dbReference>
<dbReference type="GO" id="GO:0006412">
    <property type="term" value="P:translation"/>
    <property type="evidence" value="ECO:0007669"/>
    <property type="project" value="UniProtKB-UniRule"/>
</dbReference>
<dbReference type="FunFam" id="4.10.640.10:FF:000004">
    <property type="entry name" value="30S ribosomal protein S18"/>
    <property type="match status" value="1"/>
</dbReference>
<dbReference type="Gene3D" id="4.10.640.10">
    <property type="entry name" value="Ribosomal protein S18"/>
    <property type="match status" value="1"/>
</dbReference>
<dbReference type="HAMAP" id="MF_00270">
    <property type="entry name" value="Ribosomal_bS18"/>
    <property type="match status" value="1"/>
</dbReference>
<dbReference type="InterPro" id="IPR001648">
    <property type="entry name" value="Ribosomal_bS18"/>
</dbReference>
<dbReference type="InterPro" id="IPR018275">
    <property type="entry name" value="Ribosomal_bS18_CS"/>
</dbReference>
<dbReference type="InterPro" id="IPR036870">
    <property type="entry name" value="Ribosomal_bS18_sf"/>
</dbReference>
<dbReference type="NCBIfam" id="TIGR00165">
    <property type="entry name" value="S18"/>
    <property type="match status" value="1"/>
</dbReference>
<dbReference type="PANTHER" id="PTHR13479">
    <property type="entry name" value="30S RIBOSOMAL PROTEIN S18"/>
    <property type="match status" value="1"/>
</dbReference>
<dbReference type="PANTHER" id="PTHR13479:SF40">
    <property type="entry name" value="SMALL RIBOSOMAL SUBUNIT PROTEIN BS18M"/>
    <property type="match status" value="1"/>
</dbReference>
<dbReference type="Pfam" id="PF01084">
    <property type="entry name" value="Ribosomal_S18"/>
    <property type="match status" value="1"/>
</dbReference>
<dbReference type="PRINTS" id="PR00974">
    <property type="entry name" value="RIBOSOMALS18"/>
</dbReference>
<dbReference type="SUPFAM" id="SSF46911">
    <property type="entry name" value="Ribosomal protein S18"/>
    <property type="match status" value="1"/>
</dbReference>
<dbReference type="PROSITE" id="PS00057">
    <property type="entry name" value="RIBOSOMAL_S18"/>
    <property type="match status" value="1"/>
</dbReference>